<proteinExistence type="inferred from homology"/>
<gene>
    <name evidence="1" type="primary">ruvB</name>
    <name type="ordered locus">YPA_1441</name>
</gene>
<reference key="1">
    <citation type="journal article" date="2006" name="J. Bacteriol.">
        <title>Complete genome sequence of Yersinia pestis strains Antiqua and Nepal516: evidence of gene reduction in an emerging pathogen.</title>
        <authorList>
            <person name="Chain P.S.G."/>
            <person name="Hu P."/>
            <person name="Malfatti S.A."/>
            <person name="Radnedge L."/>
            <person name="Larimer F."/>
            <person name="Vergez L.M."/>
            <person name="Worsham P."/>
            <person name="Chu M.C."/>
            <person name="Andersen G.L."/>
        </authorList>
    </citation>
    <scope>NUCLEOTIDE SEQUENCE [LARGE SCALE GENOMIC DNA]</scope>
    <source>
        <strain>Antiqua</strain>
    </source>
</reference>
<organism>
    <name type="scientific">Yersinia pestis bv. Antiqua (strain Antiqua)</name>
    <dbReference type="NCBI Taxonomy" id="360102"/>
    <lineage>
        <taxon>Bacteria</taxon>
        <taxon>Pseudomonadati</taxon>
        <taxon>Pseudomonadota</taxon>
        <taxon>Gammaproteobacteria</taxon>
        <taxon>Enterobacterales</taxon>
        <taxon>Yersiniaceae</taxon>
        <taxon>Yersinia</taxon>
    </lineage>
</organism>
<sequence length="334" mass="37050">MIEADRLISAAVINDEESIDRAIRPKLLTEYVGQPHVREQMEIFIQAAKQRGDALDHVLIFGPPGLGKTTLANIIANEMGVNLRTTSGPVLEKAGDLAAMLTNLEPHDVLFIDEIHRLSPVVEEILYPAMEDYQLDIMIGEGPAARSIKLDLPPFTLIGATTRAGSLTSPLRDRFGIVQRLEFYQVADLEHIVSRSAKCLGLELTPEGAHQLARRSRGTPRITNRLLRRVRDFAEVRADGAINGEVAMKALDMLNVDAEGFDFMDRKLLLAVIDKFMGGPVGLDNLAAAIGEERETIEDVLEPYLIQQGFIQRTPRGRIATNHAYKHFGITREE</sequence>
<feature type="chain" id="PRO_1000001500" description="Holliday junction branch migration complex subunit RuvB">
    <location>
        <begin position="1"/>
        <end position="334"/>
    </location>
</feature>
<feature type="region of interest" description="Large ATPase domain (RuvB-L)" evidence="1">
    <location>
        <begin position="4"/>
        <end position="184"/>
    </location>
</feature>
<feature type="region of interest" description="Small ATPAse domain (RuvB-S)" evidence="1">
    <location>
        <begin position="185"/>
        <end position="255"/>
    </location>
</feature>
<feature type="region of interest" description="Head domain (RuvB-H)" evidence="1">
    <location>
        <begin position="258"/>
        <end position="334"/>
    </location>
</feature>
<feature type="binding site" evidence="1">
    <location>
        <position position="23"/>
    </location>
    <ligand>
        <name>ATP</name>
        <dbReference type="ChEBI" id="CHEBI:30616"/>
    </ligand>
</feature>
<feature type="binding site" evidence="1">
    <location>
        <position position="24"/>
    </location>
    <ligand>
        <name>ATP</name>
        <dbReference type="ChEBI" id="CHEBI:30616"/>
    </ligand>
</feature>
<feature type="binding site" evidence="1">
    <location>
        <position position="65"/>
    </location>
    <ligand>
        <name>ATP</name>
        <dbReference type="ChEBI" id="CHEBI:30616"/>
    </ligand>
</feature>
<feature type="binding site" evidence="1">
    <location>
        <position position="68"/>
    </location>
    <ligand>
        <name>ATP</name>
        <dbReference type="ChEBI" id="CHEBI:30616"/>
    </ligand>
</feature>
<feature type="binding site" evidence="1">
    <location>
        <position position="69"/>
    </location>
    <ligand>
        <name>ATP</name>
        <dbReference type="ChEBI" id="CHEBI:30616"/>
    </ligand>
</feature>
<feature type="binding site" evidence="1">
    <location>
        <position position="69"/>
    </location>
    <ligand>
        <name>Mg(2+)</name>
        <dbReference type="ChEBI" id="CHEBI:18420"/>
    </ligand>
</feature>
<feature type="binding site" evidence="1">
    <location>
        <position position="70"/>
    </location>
    <ligand>
        <name>ATP</name>
        <dbReference type="ChEBI" id="CHEBI:30616"/>
    </ligand>
</feature>
<feature type="binding site" evidence="1">
    <location>
        <begin position="131"/>
        <end position="133"/>
    </location>
    <ligand>
        <name>ATP</name>
        <dbReference type="ChEBI" id="CHEBI:30616"/>
    </ligand>
</feature>
<feature type="binding site" evidence="1">
    <location>
        <position position="174"/>
    </location>
    <ligand>
        <name>ATP</name>
        <dbReference type="ChEBI" id="CHEBI:30616"/>
    </ligand>
</feature>
<feature type="binding site" evidence="1">
    <location>
        <position position="184"/>
    </location>
    <ligand>
        <name>ATP</name>
        <dbReference type="ChEBI" id="CHEBI:30616"/>
    </ligand>
</feature>
<feature type="binding site" evidence="1">
    <location>
        <position position="221"/>
    </location>
    <ligand>
        <name>ATP</name>
        <dbReference type="ChEBI" id="CHEBI:30616"/>
    </ligand>
</feature>
<feature type="binding site" evidence="1">
    <location>
        <position position="294"/>
    </location>
    <ligand>
        <name>DNA</name>
        <dbReference type="ChEBI" id="CHEBI:16991"/>
    </ligand>
</feature>
<feature type="binding site" evidence="1">
    <location>
        <position position="313"/>
    </location>
    <ligand>
        <name>DNA</name>
        <dbReference type="ChEBI" id="CHEBI:16991"/>
    </ligand>
</feature>
<feature type="binding site" evidence="1">
    <location>
        <position position="318"/>
    </location>
    <ligand>
        <name>DNA</name>
        <dbReference type="ChEBI" id="CHEBI:16991"/>
    </ligand>
</feature>
<comment type="function">
    <text evidence="1">The RuvA-RuvB-RuvC complex processes Holliday junction (HJ) DNA during genetic recombination and DNA repair, while the RuvA-RuvB complex plays an important role in the rescue of blocked DNA replication forks via replication fork reversal (RFR). RuvA specifically binds to HJ cruciform DNA, conferring on it an open structure. The RuvB hexamer acts as an ATP-dependent pump, pulling dsDNA into and through the RuvAB complex. RuvB forms 2 homohexamers on either side of HJ DNA bound by 1 or 2 RuvA tetramers; 4 subunits per hexamer contact DNA at a time. Coordinated motions by a converter formed by DNA-disengaged RuvB subunits stimulates ATP hydrolysis and nucleotide exchange. Immobilization of the converter enables RuvB to convert the ATP-contained energy into a lever motion, pulling 2 nucleotides of DNA out of the RuvA tetramer per ATP hydrolyzed, thus driving DNA branch migration. The RuvB motors rotate together with the DNA substrate, which together with the progressing nucleotide cycle form the mechanistic basis for DNA recombination by continuous HJ branch migration. Branch migration allows RuvC to scan DNA until it finds its consensus sequence, where it cleaves and resolves cruciform DNA.</text>
</comment>
<comment type="catalytic activity">
    <reaction evidence="1">
        <text>ATP + H2O = ADP + phosphate + H(+)</text>
        <dbReference type="Rhea" id="RHEA:13065"/>
        <dbReference type="ChEBI" id="CHEBI:15377"/>
        <dbReference type="ChEBI" id="CHEBI:15378"/>
        <dbReference type="ChEBI" id="CHEBI:30616"/>
        <dbReference type="ChEBI" id="CHEBI:43474"/>
        <dbReference type="ChEBI" id="CHEBI:456216"/>
    </reaction>
</comment>
<comment type="subunit">
    <text evidence="1">Homohexamer. Forms an RuvA(8)-RuvB(12)-Holliday junction (HJ) complex. HJ DNA is sandwiched between 2 RuvA tetramers; dsDNA enters through RuvA and exits via RuvB. An RuvB hexamer assembles on each DNA strand where it exits the tetramer. Each RuvB hexamer is contacted by two RuvA subunits (via domain III) on 2 adjacent RuvB subunits; this complex drives branch migration. In the full resolvosome a probable DNA-RuvA(4)-RuvB(12)-RuvC(2) complex forms which resolves the HJ.</text>
</comment>
<comment type="subcellular location">
    <subcellularLocation>
        <location evidence="1">Cytoplasm</location>
    </subcellularLocation>
</comment>
<comment type="domain">
    <text evidence="1">Has 3 domains, the large (RuvB-L) and small ATPase (RuvB-S) domains and the C-terminal head (RuvB-H) domain. The head domain binds DNA, while the ATPase domains jointly bind ATP, ADP or are empty depending on the state of the subunit in the translocation cycle. During a single DNA translocation step the structure of each domain remains the same, but their relative positions change.</text>
</comment>
<comment type="similarity">
    <text evidence="1">Belongs to the RuvB family.</text>
</comment>
<accession>Q1C814</accession>
<dbReference type="EC" id="3.6.4.-" evidence="1"/>
<dbReference type="EMBL" id="CP000308">
    <property type="protein sequence ID" value="ABG13408.1"/>
    <property type="molecule type" value="Genomic_DNA"/>
</dbReference>
<dbReference type="RefSeq" id="WP_002211198.1">
    <property type="nucleotide sequence ID" value="NZ_CP009906.1"/>
</dbReference>
<dbReference type="SMR" id="Q1C814"/>
<dbReference type="GeneID" id="57976603"/>
<dbReference type="KEGG" id="ypa:YPA_1441"/>
<dbReference type="Proteomes" id="UP000001971">
    <property type="component" value="Chromosome"/>
</dbReference>
<dbReference type="GO" id="GO:0005737">
    <property type="term" value="C:cytoplasm"/>
    <property type="evidence" value="ECO:0007669"/>
    <property type="project" value="UniProtKB-SubCell"/>
</dbReference>
<dbReference type="GO" id="GO:0048476">
    <property type="term" value="C:Holliday junction resolvase complex"/>
    <property type="evidence" value="ECO:0007669"/>
    <property type="project" value="UniProtKB-UniRule"/>
</dbReference>
<dbReference type="GO" id="GO:0005524">
    <property type="term" value="F:ATP binding"/>
    <property type="evidence" value="ECO:0007669"/>
    <property type="project" value="UniProtKB-UniRule"/>
</dbReference>
<dbReference type="GO" id="GO:0016887">
    <property type="term" value="F:ATP hydrolysis activity"/>
    <property type="evidence" value="ECO:0007669"/>
    <property type="project" value="InterPro"/>
</dbReference>
<dbReference type="GO" id="GO:0000400">
    <property type="term" value="F:four-way junction DNA binding"/>
    <property type="evidence" value="ECO:0007669"/>
    <property type="project" value="UniProtKB-UniRule"/>
</dbReference>
<dbReference type="GO" id="GO:0009378">
    <property type="term" value="F:four-way junction helicase activity"/>
    <property type="evidence" value="ECO:0007669"/>
    <property type="project" value="InterPro"/>
</dbReference>
<dbReference type="GO" id="GO:0006310">
    <property type="term" value="P:DNA recombination"/>
    <property type="evidence" value="ECO:0007669"/>
    <property type="project" value="UniProtKB-UniRule"/>
</dbReference>
<dbReference type="GO" id="GO:0006281">
    <property type="term" value="P:DNA repair"/>
    <property type="evidence" value="ECO:0007669"/>
    <property type="project" value="UniProtKB-UniRule"/>
</dbReference>
<dbReference type="CDD" id="cd00009">
    <property type="entry name" value="AAA"/>
    <property type="match status" value="1"/>
</dbReference>
<dbReference type="FunFam" id="1.10.10.10:FF:000086">
    <property type="entry name" value="Holliday junction ATP-dependent DNA helicase RuvB"/>
    <property type="match status" value="1"/>
</dbReference>
<dbReference type="FunFam" id="1.10.8.60:FF:000023">
    <property type="entry name" value="Holliday junction ATP-dependent DNA helicase RuvB"/>
    <property type="match status" value="1"/>
</dbReference>
<dbReference type="FunFam" id="3.40.50.300:FF:000073">
    <property type="entry name" value="Holliday junction ATP-dependent DNA helicase RuvB"/>
    <property type="match status" value="1"/>
</dbReference>
<dbReference type="Gene3D" id="1.10.8.60">
    <property type="match status" value="1"/>
</dbReference>
<dbReference type="Gene3D" id="3.40.50.300">
    <property type="entry name" value="P-loop containing nucleotide triphosphate hydrolases"/>
    <property type="match status" value="1"/>
</dbReference>
<dbReference type="Gene3D" id="1.10.10.10">
    <property type="entry name" value="Winged helix-like DNA-binding domain superfamily/Winged helix DNA-binding domain"/>
    <property type="match status" value="1"/>
</dbReference>
<dbReference type="HAMAP" id="MF_00016">
    <property type="entry name" value="DNA_HJ_migration_RuvB"/>
    <property type="match status" value="1"/>
</dbReference>
<dbReference type="InterPro" id="IPR003593">
    <property type="entry name" value="AAA+_ATPase"/>
</dbReference>
<dbReference type="InterPro" id="IPR041445">
    <property type="entry name" value="AAA_lid_4"/>
</dbReference>
<dbReference type="InterPro" id="IPR004605">
    <property type="entry name" value="DNA_helicase_Holl-junc_RuvB"/>
</dbReference>
<dbReference type="InterPro" id="IPR027417">
    <property type="entry name" value="P-loop_NTPase"/>
</dbReference>
<dbReference type="InterPro" id="IPR008824">
    <property type="entry name" value="RuvB-like_N"/>
</dbReference>
<dbReference type="InterPro" id="IPR008823">
    <property type="entry name" value="RuvB_C"/>
</dbReference>
<dbReference type="InterPro" id="IPR036388">
    <property type="entry name" value="WH-like_DNA-bd_sf"/>
</dbReference>
<dbReference type="InterPro" id="IPR036390">
    <property type="entry name" value="WH_DNA-bd_sf"/>
</dbReference>
<dbReference type="NCBIfam" id="NF000868">
    <property type="entry name" value="PRK00080.1"/>
    <property type="match status" value="1"/>
</dbReference>
<dbReference type="NCBIfam" id="TIGR00635">
    <property type="entry name" value="ruvB"/>
    <property type="match status" value="1"/>
</dbReference>
<dbReference type="PANTHER" id="PTHR42848">
    <property type="match status" value="1"/>
</dbReference>
<dbReference type="PANTHER" id="PTHR42848:SF1">
    <property type="entry name" value="HOLLIDAY JUNCTION BRANCH MIGRATION COMPLEX SUBUNIT RUVB"/>
    <property type="match status" value="1"/>
</dbReference>
<dbReference type="Pfam" id="PF17864">
    <property type="entry name" value="AAA_lid_4"/>
    <property type="match status" value="1"/>
</dbReference>
<dbReference type="Pfam" id="PF05491">
    <property type="entry name" value="RuvB_C"/>
    <property type="match status" value="1"/>
</dbReference>
<dbReference type="Pfam" id="PF05496">
    <property type="entry name" value="RuvB_N"/>
    <property type="match status" value="1"/>
</dbReference>
<dbReference type="SMART" id="SM00382">
    <property type="entry name" value="AAA"/>
    <property type="match status" value="1"/>
</dbReference>
<dbReference type="SUPFAM" id="SSF52540">
    <property type="entry name" value="P-loop containing nucleoside triphosphate hydrolases"/>
    <property type="match status" value="1"/>
</dbReference>
<dbReference type="SUPFAM" id="SSF46785">
    <property type="entry name" value="Winged helix' DNA-binding domain"/>
    <property type="match status" value="1"/>
</dbReference>
<name>RUVB_YERPA</name>
<keyword id="KW-0067">ATP-binding</keyword>
<keyword id="KW-0963">Cytoplasm</keyword>
<keyword id="KW-0227">DNA damage</keyword>
<keyword id="KW-0233">DNA recombination</keyword>
<keyword id="KW-0234">DNA repair</keyword>
<keyword id="KW-0238">DNA-binding</keyword>
<keyword id="KW-0378">Hydrolase</keyword>
<keyword id="KW-0547">Nucleotide-binding</keyword>
<protein>
    <recommendedName>
        <fullName evidence="1">Holliday junction branch migration complex subunit RuvB</fullName>
        <ecNumber evidence="1">3.6.4.-</ecNumber>
    </recommendedName>
</protein>
<evidence type="ECO:0000255" key="1">
    <source>
        <dbReference type="HAMAP-Rule" id="MF_00016"/>
    </source>
</evidence>